<evidence type="ECO:0000255" key="1">
    <source>
        <dbReference type="HAMAP-Rule" id="MF_00735"/>
    </source>
</evidence>
<protein>
    <recommendedName>
        <fullName evidence="1">Ribosomal protein L11 methyltransferase</fullName>
        <shortName evidence="1">L11 Mtase</shortName>
        <ecNumber evidence="1">2.1.1.-</ecNumber>
    </recommendedName>
</protein>
<reference key="1">
    <citation type="submission" date="2007-10" db="EMBL/GenBank/DDBJ databases">
        <title>Genome sequence of Campylobacter concisus 13826 isolated from human feces.</title>
        <authorList>
            <person name="Fouts D.E."/>
            <person name="Mongodin E.F."/>
            <person name="Puiu D."/>
            <person name="Sebastian Y."/>
            <person name="Miller W.G."/>
            <person name="Mandrell R.E."/>
            <person name="On S."/>
            <person name="Nelson K.E."/>
        </authorList>
    </citation>
    <scope>NUCLEOTIDE SEQUENCE [LARGE SCALE GENOMIC DNA]</scope>
    <source>
        <strain>13826</strain>
    </source>
</reference>
<gene>
    <name evidence="1" type="primary">prmA</name>
    <name type="ordered locus">Ccon26_14380</name>
    <name type="ORF">CCC13826_0442</name>
</gene>
<keyword id="KW-0963">Cytoplasm</keyword>
<keyword id="KW-0489">Methyltransferase</keyword>
<keyword id="KW-0949">S-adenosyl-L-methionine</keyword>
<keyword id="KW-0808">Transferase</keyword>
<feature type="chain" id="PRO_1000192595" description="Ribosomal protein L11 methyltransferase">
    <location>
        <begin position="1"/>
        <end position="277"/>
    </location>
</feature>
<feature type="binding site" evidence="1">
    <location>
        <position position="130"/>
    </location>
    <ligand>
        <name>S-adenosyl-L-methionine</name>
        <dbReference type="ChEBI" id="CHEBI:59789"/>
    </ligand>
</feature>
<feature type="binding site" evidence="1">
    <location>
        <position position="151"/>
    </location>
    <ligand>
        <name>S-adenosyl-L-methionine</name>
        <dbReference type="ChEBI" id="CHEBI:59789"/>
    </ligand>
</feature>
<feature type="binding site" evidence="1">
    <location>
        <position position="172"/>
    </location>
    <ligand>
        <name>S-adenosyl-L-methionine</name>
        <dbReference type="ChEBI" id="CHEBI:59789"/>
    </ligand>
</feature>
<feature type="binding site" evidence="1">
    <location>
        <position position="213"/>
    </location>
    <ligand>
        <name>S-adenosyl-L-methionine</name>
        <dbReference type="ChEBI" id="CHEBI:59789"/>
    </ligand>
</feature>
<dbReference type="EC" id="2.1.1.-" evidence="1"/>
<dbReference type="EMBL" id="CP000792">
    <property type="protein sequence ID" value="EAT99298.1"/>
    <property type="molecule type" value="Genomic_DNA"/>
</dbReference>
<dbReference type="RefSeq" id="WP_012140177.1">
    <property type="nucleotide sequence ID" value="NC_009802.2"/>
</dbReference>
<dbReference type="SMR" id="A7ZES6"/>
<dbReference type="STRING" id="360104.CCC13826_0442"/>
<dbReference type="KEGG" id="cco:CCC13826_0442"/>
<dbReference type="eggNOG" id="COG2264">
    <property type="taxonomic scope" value="Bacteria"/>
</dbReference>
<dbReference type="HOGENOM" id="CLU_049382_1_0_7"/>
<dbReference type="OrthoDB" id="9785995at2"/>
<dbReference type="Proteomes" id="UP000001121">
    <property type="component" value="Chromosome"/>
</dbReference>
<dbReference type="GO" id="GO:0005737">
    <property type="term" value="C:cytoplasm"/>
    <property type="evidence" value="ECO:0007669"/>
    <property type="project" value="UniProtKB-SubCell"/>
</dbReference>
<dbReference type="GO" id="GO:0016279">
    <property type="term" value="F:protein-lysine N-methyltransferase activity"/>
    <property type="evidence" value="ECO:0007669"/>
    <property type="project" value="RHEA"/>
</dbReference>
<dbReference type="GO" id="GO:0032259">
    <property type="term" value="P:methylation"/>
    <property type="evidence" value="ECO:0007669"/>
    <property type="project" value="UniProtKB-KW"/>
</dbReference>
<dbReference type="CDD" id="cd02440">
    <property type="entry name" value="AdoMet_MTases"/>
    <property type="match status" value="1"/>
</dbReference>
<dbReference type="Gene3D" id="3.40.50.150">
    <property type="entry name" value="Vaccinia Virus protein VP39"/>
    <property type="match status" value="1"/>
</dbReference>
<dbReference type="HAMAP" id="MF_00735">
    <property type="entry name" value="Methyltr_PrmA"/>
    <property type="match status" value="1"/>
</dbReference>
<dbReference type="InterPro" id="IPR050078">
    <property type="entry name" value="Ribosomal_L11_MeTrfase_PrmA"/>
</dbReference>
<dbReference type="InterPro" id="IPR004498">
    <property type="entry name" value="Ribosomal_PrmA_MeTrfase"/>
</dbReference>
<dbReference type="InterPro" id="IPR029063">
    <property type="entry name" value="SAM-dependent_MTases_sf"/>
</dbReference>
<dbReference type="NCBIfam" id="NF001786">
    <property type="entry name" value="PRK00517.2-4"/>
    <property type="match status" value="1"/>
</dbReference>
<dbReference type="NCBIfam" id="TIGR00406">
    <property type="entry name" value="prmA"/>
    <property type="match status" value="1"/>
</dbReference>
<dbReference type="PANTHER" id="PTHR43648">
    <property type="entry name" value="ELECTRON TRANSFER FLAVOPROTEIN BETA SUBUNIT LYSINE METHYLTRANSFERASE"/>
    <property type="match status" value="1"/>
</dbReference>
<dbReference type="PANTHER" id="PTHR43648:SF1">
    <property type="entry name" value="ELECTRON TRANSFER FLAVOPROTEIN BETA SUBUNIT LYSINE METHYLTRANSFERASE"/>
    <property type="match status" value="1"/>
</dbReference>
<dbReference type="Pfam" id="PF06325">
    <property type="entry name" value="PrmA"/>
    <property type="match status" value="1"/>
</dbReference>
<dbReference type="PIRSF" id="PIRSF000401">
    <property type="entry name" value="RPL11_MTase"/>
    <property type="match status" value="1"/>
</dbReference>
<dbReference type="SUPFAM" id="SSF53335">
    <property type="entry name" value="S-adenosyl-L-methionine-dependent methyltransferases"/>
    <property type="match status" value="1"/>
</dbReference>
<name>PRMA_CAMC1</name>
<proteinExistence type="inferred from homology"/>
<sequence>MKDKFYELSIKTSNFYDEILELVFSFGVTCVEELDHEIIIREEYDLKDIAWGVEEYAKGLSSVRKISNDLKISLNLKENKDWLGEYKRAVKPILVDKIYIRPSWEESLSGVTNIIIDPALAFGSGHHESTNSCLQLLQKYAKSGDTALDVGCGSGILSIALAKLGCKVDACDTDEQATQSSLSNAQLNEVKFNKIWTGSIANLEQKYDIVVANIIADVIFMLSNDLKKSLKKGGYLVLSGILNKYEDRIKDTFKDLELVEIKQANDWVSFVYKEMDE</sequence>
<accession>A7ZES6</accession>
<comment type="function">
    <text evidence="1">Methylates ribosomal protein L11.</text>
</comment>
<comment type="catalytic activity">
    <reaction evidence="1">
        <text>L-lysyl-[protein] + 3 S-adenosyl-L-methionine = N(6),N(6),N(6)-trimethyl-L-lysyl-[protein] + 3 S-adenosyl-L-homocysteine + 3 H(+)</text>
        <dbReference type="Rhea" id="RHEA:54192"/>
        <dbReference type="Rhea" id="RHEA-COMP:9752"/>
        <dbReference type="Rhea" id="RHEA-COMP:13826"/>
        <dbReference type="ChEBI" id="CHEBI:15378"/>
        <dbReference type="ChEBI" id="CHEBI:29969"/>
        <dbReference type="ChEBI" id="CHEBI:57856"/>
        <dbReference type="ChEBI" id="CHEBI:59789"/>
        <dbReference type="ChEBI" id="CHEBI:61961"/>
    </reaction>
</comment>
<comment type="subcellular location">
    <subcellularLocation>
        <location evidence="1">Cytoplasm</location>
    </subcellularLocation>
</comment>
<comment type="similarity">
    <text evidence="1">Belongs to the methyltransferase superfamily. PrmA family.</text>
</comment>
<organism>
    <name type="scientific">Campylobacter concisus (strain 13826)</name>
    <dbReference type="NCBI Taxonomy" id="360104"/>
    <lineage>
        <taxon>Bacteria</taxon>
        <taxon>Pseudomonadati</taxon>
        <taxon>Campylobacterota</taxon>
        <taxon>Epsilonproteobacteria</taxon>
        <taxon>Campylobacterales</taxon>
        <taxon>Campylobacteraceae</taxon>
        <taxon>Campylobacter</taxon>
    </lineage>
</organism>